<keyword id="KW-0256">Endoplasmic reticulum</keyword>
<keyword id="KW-0325">Glycoprotein</keyword>
<keyword id="KW-0378">Hydrolase</keyword>
<keyword id="KW-0443">Lipid metabolism</keyword>
<keyword id="KW-0472">Membrane</keyword>
<keyword id="KW-1185">Reference proteome</keyword>
<keyword id="KW-0746">Sphingolipid metabolism</keyword>
<keyword id="KW-0812">Transmembrane</keyword>
<keyword id="KW-1133">Transmembrane helix</keyword>
<protein>
    <recommendedName>
        <fullName evidence="10">Dihydrosphingosine 1-phosphate phosphatase YSR3</fullName>
        <ecNumber evidence="7">3.1.3.-</ecNumber>
    </recommendedName>
    <alternativeName>
        <fullName evidence="11">Long-chain base protein 2</fullName>
    </alternativeName>
    <alternativeName>
        <fullName evidence="10">Sphingolipid resistance protein 3</fullName>
    </alternativeName>
</protein>
<dbReference type="EC" id="3.1.3.-" evidence="7"/>
<dbReference type="EMBL" id="Z28278">
    <property type="protein sequence ID" value="CAA82131.1"/>
    <property type="molecule type" value="Genomic_DNA"/>
</dbReference>
<dbReference type="EMBL" id="X56444">
    <property type="protein sequence ID" value="CAA39827.1"/>
    <property type="molecule type" value="Genomic_DNA"/>
</dbReference>
<dbReference type="EMBL" id="BK006944">
    <property type="protein sequence ID" value="DAA09204.1"/>
    <property type="molecule type" value="Genomic_DNA"/>
</dbReference>
<dbReference type="PIR" id="S38127">
    <property type="entry name" value="S38127"/>
</dbReference>
<dbReference type="RefSeq" id="NP_012979.3">
    <property type="nucleotide sequence ID" value="NM_001179843.3"/>
</dbReference>
<dbReference type="BioGRID" id="34184">
    <property type="interactions" value="139"/>
</dbReference>
<dbReference type="DIP" id="DIP-5258N"/>
<dbReference type="FunCoup" id="P23501">
    <property type="interactions" value="417"/>
</dbReference>
<dbReference type="IntAct" id="P23501">
    <property type="interactions" value="1"/>
</dbReference>
<dbReference type="STRING" id="4932.YKR053C"/>
<dbReference type="SwissLipids" id="SLP:000000933"/>
<dbReference type="GlyCosmos" id="P23501">
    <property type="glycosylation" value="1 site, No reported glycans"/>
</dbReference>
<dbReference type="GlyGen" id="P23501">
    <property type="glycosylation" value="1 site"/>
</dbReference>
<dbReference type="PaxDb" id="4932-YKR053C"/>
<dbReference type="PeptideAtlas" id="P23501"/>
<dbReference type="EnsemblFungi" id="YKR053C_mRNA">
    <property type="protein sequence ID" value="YKR053C"/>
    <property type="gene ID" value="YKR053C"/>
</dbReference>
<dbReference type="GeneID" id="853927"/>
<dbReference type="KEGG" id="sce:YKR053C"/>
<dbReference type="AGR" id="SGD:S000001761"/>
<dbReference type="SGD" id="S000001761">
    <property type="gene designation" value="YSR3"/>
</dbReference>
<dbReference type="VEuPathDB" id="FungiDB:YKR053C"/>
<dbReference type="eggNOG" id="KOG2822">
    <property type="taxonomic scope" value="Eukaryota"/>
</dbReference>
<dbReference type="GeneTree" id="ENSGT00660000096503"/>
<dbReference type="HOGENOM" id="CLU_019266_1_1_1"/>
<dbReference type="InParanoid" id="P23501"/>
<dbReference type="OMA" id="KFMVGIV"/>
<dbReference type="OrthoDB" id="301434at2759"/>
<dbReference type="BioCyc" id="MetaCyc:YKR053C-MONOMER"/>
<dbReference type="BioCyc" id="YEAST:YKR053C-MONOMER"/>
<dbReference type="Reactome" id="R-SCE-9845614">
    <property type="pathway name" value="Sphingolipid catabolism"/>
</dbReference>
<dbReference type="BioGRID-ORCS" id="853927">
    <property type="hits" value="0 hits in 10 CRISPR screens"/>
</dbReference>
<dbReference type="PRO" id="PR:P23501"/>
<dbReference type="Proteomes" id="UP000002311">
    <property type="component" value="Chromosome XI"/>
</dbReference>
<dbReference type="RNAct" id="P23501">
    <property type="molecule type" value="protein"/>
</dbReference>
<dbReference type="GO" id="GO:0005783">
    <property type="term" value="C:endoplasmic reticulum"/>
    <property type="evidence" value="ECO:0000314"/>
    <property type="project" value="SGD"/>
</dbReference>
<dbReference type="GO" id="GO:0005789">
    <property type="term" value="C:endoplasmic reticulum membrane"/>
    <property type="evidence" value="ECO:0000318"/>
    <property type="project" value="GO_Central"/>
</dbReference>
<dbReference type="GO" id="GO:0070780">
    <property type="term" value="F:dihydrosphingosine-1-phosphate phosphatase activity"/>
    <property type="evidence" value="ECO:0007669"/>
    <property type="project" value="RHEA"/>
</dbReference>
<dbReference type="GO" id="GO:0042392">
    <property type="term" value="F:sphingosine-1-phosphate phosphatase activity"/>
    <property type="evidence" value="ECO:0000314"/>
    <property type="project" value="SGD"/>
</dbReference>
<dbReference type="GO" id="GO:0046839">
    <property type="term" value="P:phospholipid dephosphorylation"/>
    <property type="evidence" value="ECO:0000314"/>
    <property type="project" value="SGD"/>
</dbReference>
<dbReference type="GO" id="GO:0030148">
    <property type="term" value="P:sphingolipid biosynthetic process"/>
    <property type="evidence" value="ECO:0000315"/>
    <property type="project" value="SGD"/>
</dbReference>
<dbReference type="CDD" id="cd03388">
    <property type="entry name" value="PAP2_SPPase1"/>
    <property type="match status" value="1"/>
</dbReference>
<dbReference type="FunFam" id="1.20.144.10:FF:000034">
    <property type="entry name" value="Dihydrosphingosine-1-phosphate phosphatase"/>
    <property type="match status" value="1"/>
</dbReference>
<dbReference type="Gene3D" id="1.20.144.10">
    <property type="entry name" value="Phosphatidic acid phosphatase type 2/haloperoxidase"/>
    <property type="match status" value="1"/>
</dbReference>
<dbReference type="InterPro" id="IPR036938">
    <property type="entry name" value="P_Acid_Pase_2/haloperoxi_sf"/>
</dbReference>
<dbReference type="InterPro" id="IPR000326">
    <property type="entry name" value="P_Acid_Pase_2/haloperoxidase"/>
</dbReference>
<dbReference type="PANTHER" id="PTHR14969:SF28">
    <property type="entry name" value="DIHYDROSPHINGOSINE 1-PHOSPHATE PHOSPHATASE LCB3-RELATED"/>
    <property type="match status" value="1"/>
</dbReference>
<dbReference type="PANTHER" id="PTHR14969">
    <property type="entry name" value="SPHINGOSINE-1-PHOSPHATE PHOSPHOHYDROLASE"/>
    <property type="match status" value="1"/>
</dbReference>
<dbReference type="Pfam" id="PF01569">
    <property type="entry name" value="PAP2"/>
    <property type="match status" value="1"/>
</dbReference>
<dbReference type="SMART" id="SM00014">
    <property type="entry name" value="acidPPc"/>
    <property type="match status" value="1"/>
</dbReference>
<dbReference type="SUPFAM" id="SSF48317">
    <property type="entry name" value="Acid phosphatase/Vanadium-dependent haloperoxidase"/>
    <property type="match status" value="1"/>
</dbReference>
<evidence type="ECO:0000250" key="1">
    <source>
        <dbReference type="UniProtKB" id="P0A924"/>
    </source>
</evidence>
<evidence type="ECO:0000250" key="2">
    <source>
        <dbReference type="UniProtKB" id="P47013"/>
    </source>
</evidence>
<evidence type="ECO:0000255" key="3"/>
<evidence type="ECO:0000269" key="4">
    <source>
    </source>
</evidence>
<evidence type="ECO:0000269" key="5">
    <source>
    </source>
</evidence>
<evidence type="ECO:0000269" key="6">
    <source>
    </source>
</evidence>
<evidence type="ECO:0000269" key="7">
    <source>
    </source>
</evidence>
<evidence type="ECO:0000269" key="8">
    <source>
    </source>
</evidence>
<evidence type="ECO:0000269" key="9">
    <source>
    </source>
</evidence>
<evidence type="ECO:0000303" key="10">
    <source>
    </source>
</evidence>
<evidence type="ECO:0000303" key="11">
    <source>
    </source>
</evidence>
<evidence type="ECO:0000305" key="12"/>
<accession>P23501</accession>
<accession>D6VXB4</accession>
<name>DS1P2_YEAST</name>
<proteinExistence type="evidence at protein level"/>
<sequence length="404" mass="46488">MTIIQTVTELGVTEDTIKVQMAPSGGKHLLADPGNHPAEHFESQMSWLRFQTRQYLTRFTDNQSDFVHSLQKKHRTPFRDVYFKYTSLMGSHMFYVIVLPMPVWLGYRDLTRDMIYVLGYSIYLSGYLKDYWCLPRPKSPPVDRITLSEYTTKEYGAPSSHSANATAVSLLFFWRICLSDTLVWPTKLLLLSLVIFYYLTLVFGRVYCGMHGMLDLFSGAAVGAICFFIRIWVVHALRNFQIGEHLWFPLLSVAWGLFILFNHVRPIDECPCFEDSVAFIGVVSGLDCSDWLTERYGWNLVCSRYASCGSKVFLRPLVGVASVIVWKDVISKTAVYTLLIKLLRFHDDRSEKVHFHNETSEEEECLLYSGVSKVEIVGRFLIYAGIPTTVFLLCPVFFTWTNLR</sequence>
<gene>
    <name evidence="10" type="primary">YSR3</name>
    <name evidence="11" type="synonym">LBP2</name>
    <name type="ordered locus">YKR053C</name>
</gene>
<reference key="1">
    <citation type="journal article" date="1994" name="Nature">
        <title>Complete DNA sequence of yeast chromosome XI.</title>
        <authorList>
            <person name="Dujon B."/>
            <person name="Alexandraki D."/>
            <person name="Andre B."/>
            <person name="Ansorge W."/>
            <person name="Baladron V."/>
            <person name="Ballesta J.P.G."/>
            <person name="Banrevi A."/>
            <person name="Bolle P.-A."/>
            <person name="Bolotin-Fukuhara M."/>
            <person name="Bossier P."/>
            <person name="Bou G."/>
            <person name="Boyer J."/>
            <person name="Buitrago M.J."/>
            <person name="Cheret G."/>
            <person name="Colleaux L."/>
            <person name="Daignan-Fornier B."/>
            <person name="del Rey F."/>
            <person name="Dion C."/>
            <person name="Domdey H."/>
            <person name="Duesterhoeft A."/>
            <person name="Duesterhus S."/>
            <person name="Entian K.-D."/>
            <person name="Erfle H."/>
            <person name="Esteban P.F."/>
            <person name="Feldmann H."/>
            <person name="Fernandes L."/>
            <person name="Fobo G.M."/>
            <person name="Fritz C."/>
            <person name="Fukuhara H."/>
            <person name="Gabel C."/>
            <person name="Gaillon L."/>
            <person name="Garcia-Cantalejo J.M."/>
            <person name="Garcia-Ramirez J.J."/>
            <person name="Gent M.E."/>
            <person name="Ghazvini M."/>
            <person name="Goffeau A."/>
            <person name="Gonzalez A."/>
            <person name="Grothues D."/>
            <person name="Guerreiro P."/>
            <person name="Hegemann J.H."/>
            <person name="Hewitt N."/>
            <person name="Hilger F."/>
            <person name="Hollenberg C.P."/>
            <person name="Horaitis O."/>
            <person name="Indge K.J."/>
            <person name="Jacquier A."/>
            <person name="James C.M."/>
            <person name="Jauniaux J.-C."/>
            <person name="Jimenez A."/>
            <person name="Keuchel H."/>
            <person name="Kirchrath L."/>
            <person name="Kleine K."/>
            <person name="Koetter P."/>
            <person name="Legrain P."/>
            <person name="Liebl S."/>
            <person name="Louis E.J."/>
            <person name="Maia e Silva A."/>
            <person name="Marck C."/>
            <person name="Monnier A.-L."/>
            <person name="Moestl D."/>
            <person name="Mueller S."/>
            <person name="Obermaier B."/>
            <person name="Oliver S.G."/>
            <person name="Pallier C."/>
            <person name="Pascolo S."/>
            <person name="Pfeiffer F."/>
            <person name="Philippsen P."/>
            <person name="Planta R.J."/>
            <person name="Pohl F.M."/>
            <person name="Pohl T.M."/>
            <person name="Poehlmann R."/>
            <person name="Portetelle D."/>
            <person name="Purnelle B."/>
            <person name="Puzos V."/>
            <person name="Ramezani Rad M."/>
            <person name="Rasmussen S.W."/>
            <person name="Remacha M.A."/>
            <person name="Revuelta J.L."/>
            <person name="Richard G.-F."/>
            <person name="Rieger M."/>
            <person name="Rodrigues-Pousada C."/>
            <person name="Rose M."/>
            <person name="Rupp T."/>
            <person name="Santos M.A."/>
            <person name="Schwager C."/>
            <person name="Sensen C."/>
            <person name="Skala J."/>
            <person name="Soares H."/>
            <person name="Sor F."/>
            <person name="Stegemann J."/>
            <person name="Tettelin H."/>
            <person name="Thierry A."/>
            <person name="Tzermia M."/>
            <person name="Urrestarazu L.A."/>
            <person name="van Dyck L."/>
            <person name="van Vliet-Reedijk J.C."/>
            <person name="Valens M."/>
            <person name="Vandenbol M."/>
            <person name="Vilela C."/>
            <person name="Vissers S."/>
            <person name="von Wettstein D."/>
            <person name="Voss H."/>
            <person name="Wiemann S."/>
            <person name="Xu G."/>
            <person name="Zimmermann J."/>
            <person name="Haasemann M."/>
            <person name="Becker I."/>
            <person name="Mewes H.-W."/>
        </authorList>
    </citation>
    <scope>NUCLEOTIDE SEQUENCE [LARGE SCALE GENOMIC DNA]</scope>
    <source>
        <strain>ATCC 204508 / S288c</strain>
    </source>
</reference>
<reference key="2">
    <citation type="journal article" date="2014" name="G3 (Bethesda)">
        <title>The reference genome sequence of Saccharomyces cerevisiae: Then and now.</title>
        <authorList>
            <person name="Engel S.R."/>
            <person name="Dietrich F.S."/>
            <person name="Fisk D.G."/>
            <person name="Binkley G."/>
            <person name="Balakrishnan R."/>
            <person name="Costanzo M.C."/>
            <person name="Dwight S.S."/>
            <person name="Hitz B.C."/>
            <person name="Karra K."/>
            <person name="Nash R.S."/>
            <person name="Weng S."/>
            <person name="Wong E.D."/>
            <person name="Lloyd P."/>
            <person name="Skrzypek M.S."/>
            <person name="Miyasato S.R."/>
            <person name="Simison M."/>
            <person name="Cherry J.M."/>
        </authorList>
    </citation>
    <scope>GENOME REANNOTATION</scope>
    <source>
        <strain>ATCC 204508 / S288c</strain>
    </source>
</reference>
<reference key="3">
    <citation type="journal article" date="1991" name="J. Mol. Biol.">
        <title>MRS3 and MRS4, two suppressors of mtRNA splicing defects in yeast, are new members of the mitochondrial carrier family.</title>
        <authorList>
            <person name="Wiesenberger G."/>
            <person name="Link T.A."/>
            <person name="von Ahsen U."/>
            <person name="Waldherr M."/>
            <person name="Schweyen R.J."/>
        </authorList>
    </citation>
    <scope>NUCLEOTIDE SEQUENCE [GENOMIC DNA] OF 197-404</scope>
    <source>
        <strain>M1301</strain>
    </source>
</reference>
<reference key="4">
    <citation type="journal article" date="1997" name="J. Biol. Chem.">
        <title>Identification and characterization of Saccharomyces cerevisiae dihydrosphingosine-1-phosphate phosphatase.</title>
        <authorList>
            <person name="Mao C."/>
            <person name="Wadleigh M."/>
            <person name="Jenkins G.M."/>
            <person name="Hannun Y.A."/>
            <person name="Obeid L.M."/>
        </authorList>
    </citation>
    <scope>FUNCTION</scope>
    <scope>SUBCELLULAR LOCATION</scope>
</reference>
<reference key="5">
    <citation type="journal article" date="1998" name="Proc. Natl. Acad. Sci. U.S.A.">
        <title>Sphingoid base 1-phosphate phosphatase: a key regulator of sphingolipid metabolism and stress response.</title>
        <authorList>
            <person name="Mandala S.M."/>
            <person name="Thornton R."/>
            <person name="Tu Z."/>
            <person name="Kurtz M.B."/>
            <person name="Nickels J."/>
            <person name="Broach J."/>
            <person name="Menzeleev R."/>
            <person name="Spiegel S."/>
        </authorList>
    </citation>
    <scope>FUNCTION</scope>
</reference>
<reference key="6">
    <citation type="journal article" date="1999" name="Biochem. J.">
        <title>The dihydrosphingosine-1-phosphate phosphatases of Saccharomyces cerevisiae are important regulators of cell proliferation and heat stress responses.</title>
        <authorList>
            <person name="Mao C."/>
            <person name="Saba J.D."/>
            <person name="Obeid L.M."/>
        </authorList>
    </citation>
    <scope>FUNCTION</scope>
    <scope>SUBCELLULAR LOCATION</scope>
</reference>
<reference key="7">
    <citation type="journal article" date="2000" name="EMBO J.">
        <title>Sphingoid base synthesis requirement for endocytosis in Saccharomyces cerevisiae.</title>
        <authorList>
            <person name="Zanolari B."/>
            <person name="Friant S."/>
            <person name="Funato K."/>
            <person name="Suetterlin C."/>
            <person name="Stevenson B.J."/>
            <person name="Riezman H."/>
        </authorList>
    </citation>
    <scope>FUNCTION</scope>
</reference>
<reference key="8">
    <citation type="journal article" date="2000" name="Methods Enzymol.">
        <title>Yeast sphingosine-1-phosphate phosphatases: assay, expression, deletion, purification, and cellular localization by GFP tagging.</title>
        <authorList>
            <person name="Mao C."/>
            <person name="Obeid L.M."/>
        </authorList>
    </citation>
    <scope>FUNCTION</scope>
    <scope>SUBCELLULAR LOCATION</scope>
</reference>
<reference key="9">
    <citation type="journal article" date="2014" name="Nat. Commun.">
        <title>Identification of the phytosphingosine metabolic pathway leading to odd-numbered fatty acids.</title>
        <authorList>
            <person name="Kondo N."/>
            <person name="Ohno Y."/>
            <person name="Yamagata M."/>
            <person name="Obara T."/>
            <person name="Seki N."/>
            <person name="Kitamura T."/>
            <person name="Naganuma T."/>
            <person name="Kihara A."/>
        </authorList>
    </citation>
    <scope>FUNCTION</scope>
    <scope>CATALYTIC ACTIVITY</scope>
</reference>
<organism>
    <name type="scientific">Saccharomyces cerevisiae (strain ATCC 204508 / S288c)</name>
    <name type="common">Baker's yeast</name>
    <dbReference type="NCBI Taxonomy" id="559292"/>
    <lineage>
        <taxon>Eukaryota</taxon>
        <taxon>Fungi</taxon>
        <taxon>Dikarya</taxon>
        <taxon>Ascomycota</taxon>
        <taxon>Saccharomycotina</taxon>
        <taxon>Saccharomycetes</taxon>
        <taxon>Saccharomycetales</taxon>
        <taxon>Saccharomycetaceae</taxon>
        <taxon>Saccharomyces</taxon>
    </lineage>
</organism>
<feature type="chain" id="PRO_0000203216" description="Dihydrosphingosine 1-phosphate phosphatase YSR3">
    <location>
        <begin position="1"/>
        <end position="404"/>
    </location>
</feature>
<feature type="topological domain" description="Lumenal" evidence="2">
    <location>
        <begin position="1"/>
        <end position="86"/>
    </location>
</feature>
<feature type="transmembrane region" description="Helical; Name=1" evidence="3">
    <location>
        <begin position="87"/>
        <end position="107"/>
    </location>
</feature>
<feature type="topological domain" description="Cytoplasmic" evidence="2">
    <location>
        <begin position="108"/>
        <end position="113"/>
    </location>
</feature>
<feature type="transmembrane region" description="Helical; Name=2" evidence="3">
    <location>
        <begin position="114"/>
        <end position="134"/>
    </location>
</feature>
<feature type="topological domain" description="Lumenal" evidence="2">
    <location>
        <begin position="135"/>
        <end position="154"/>
    </location>
</feature>
<feature type="transmembrane region" description="Helical; Name=3" evidence="3">
    <location>
        <begin position="155"/>
        <end position="176"/>
    </location>
</feature>
<feature type="topological domain" description="Cytoplasmic" evidence="2">
    <location>
        <begin position="177"/>
        <end position="182"/>
    </location>
</feature>
<feature type="transmembrane region" description="Helical; Name=4" evidence="3">
    <location>
        <begin position="183"/>
        <end position="203"/>
    </location>
</feature>
<feature type="topological domain" description="Lumenal" evidence="2">
    <location>
        <begin position="204"/>
        <end position="215"/>
    </location>
</feature>
<feature type="transmembrane region" description="Helical; Name=5" evidence="3">
    <location>
        <begin position="216"/>
        <end position="236"/>
    </location>
</feature>
<feature type="topological domain" description="Cytoplasmic" evidence="2">
    <location>
        <begin position="237"/>
        <end position="241"/>
    </location>
</feature>
<feature type="transmembrane region" description="Helical; Name=6" evidence="3">
    <location>
        <begin position="242"/>
        <end position="262"/>
    </location>
</feature>
<feature type="topological domain" description="Lumenal" evidence="2">
    <location>
        <begin position="263"/>
        <end position="319"/>
    </location>
</feature>
<feature type="transmembrane region" description="Helical; Name=7" evidence="3">
    <location>
        <begin position="320"/>
        <end position="340"/>
    </location>
</feature>
<feature type="topological domain" description="Cytoplasmic" evidence="2">
    <location>
        <begin position="341"/>
        <end position="379"/>
    </location>
</feature>
<feature type="transmembrane region" description="Helical; Name=8" evidence="3">
    <location>
        <begin position="380"/>
        <end position="400"/>
    </location>
</feature>
<feature type="topological domain" description="Lumenal" evidence="2">
    <location>
        <begin position="401"/>
        <end position="404"/>
    </location>
</feature>
<feature type="region of interest" description="Phosphatase sequence motif I" evidence="12">
    <location>
        <begin position="129"/>
        <end position="137"/>
    </location>
</feature>
<feature type="region of interest" description="Phosphatase sequence motif II" evidence="12">
    <location>
        <begin position="158"/>
        <end position="161"/>
    </location>
</feature>
<feature type="region of interest" description="Phosphatase sequence motif III" evidence="12">
    <location>
        <begin position="204"/>
        <end position="215"/>
    </location>
</feature>
<feature type="active site" description="Proton donor" evidence="1">
    <location>
        <position position="161"/>
    </location>
</feature>
<feature type="active site" description="Nucleophile" evidence="1">
    <location>
        <position position="211"/>
    </location>
</feature>
<feature type="site" description="Stabilizes the active site histidine for nucleophilic attack" evidence="1">
    <location>
        <position position="215"/>
    </location>
</feature>
<feature type="glycosylation site" description="N-linked (GlcNAc...) asparagine" evidence="3">
    <location>
        <position position="62"/>
    </location>
</feature>
<comment type="function">
    <text evidence="4 5 6 8 9">Dihydrosphingosine 1-phosphate phosphatase required for efficient ceramide synthesis from exogenous sphingoid bases (PubMed:10477278, PubMed:10563329, PubMed:10856228, PubMed:9353337, PubMed:9419344). Involved in endocytosis and calcium-mediated signaling (PubMed:10856228).</text>
</comment>
<comment type="catalytic activity">
    <reaction evidence="7">
        <text>sphinganine 1-phosphate + H2O = sphinganine + phosphate</text>
        <dbReference type="Rhea" id="RHEA:27514"/>
        <dbReference type="ChEBI" id="CHEBI:15377"/>
        <dbReference type="ChEBI" id="CHEBI:43474"/>
        <dbReference type="ChEBI" id="CHEBI:57817"/>
        <dbReference type="ChEBI" id="CHEBI:57939"/>
    </reaction>
    <physiologicalReaction direction="left-to-right" evidence="7">
        <dbReference type="Rhea" id="RHEA:27515"/>
    </physiologicalReaction>
</comment>
<comment type="subcellular location">
    <subcellularLocation>
        <location evidence="4 5 8">Endoplasmic reticulum membrane</location>
        <topology evidence="4 5 8">Multi-pass membrane protein</topology>
    </subcellularLocation>
</comment>
<comment type="similarity">
    <text evidence="12">Belongs to the type 2 lipid phosphate phosphatase family.</text>
</comment>